<organism>
    <name type="scientific">Borreliella burgdorferi (strain ATCC 35210 / DSM 4680 / CIP 102532 / B31)</name>
    <name type="common">Borrelia burgdorferi</name>
    <dbReference type="NCBI Taxonomy" id="224326"/>
    <lineage>
        <taxon>Bacteria</taxon>
        <taxon>Pseudomonadati</taxon>
        <taxon>Spirochaetota</taxon>
        <taxon>Spirochaetia</taxon>
        <taxon>Spirochaetales</taxon>
        <taxon>Borreliaceae</taxon>
        <taxon>Borreliella</taxon>
    </lineage>
</organism>
<name>TSAE_BORBU</name>
<proteinExistence type="inferred from homology"/>
<feature type="chain" id="PRO_0000096212" description="tRNA threonylcarbamoyladenosine biosynthesis protein TsaE">
    <location>
        <begin position="1"/>
        <end position="137"/>
    </location>
</feature>
<feature type="binding site" evidence="1">
    <location>
        <position position="8"/>
    </location>
    <ligand>
        <name>ATP</name>
        <dbReference type="ChEBI" id="CHEBI:30616"/>
    </ligand>
</feature>
<feature type="binding site" evidence="1">
    <location>
        <begin position="35"/>
        <end position="40"/>
    </location>
    <ligand>
        <name>ATP</name>
        <dbReference type="ChEBI" id="CHEBI:30616"/>
    </ligand>
</feature>
<feature type="binding site" evidence="1">
    <location>
        <position position="39"/>
    </location>
    <ligand>
        <name>Mg(2+)</name>
        <dbReference type="ChEBI" id="CHEBI:18420"/>
    </ligand>
</feature>
<feature type="binding site" evidence="1">
    <location>
        <position position="105"/>
    </location>
    <ligand>
        <name>Mg(2+)</name>
        <dbReference type="ChEBI" id="CHEBI:18420"/>
    </ligand>
</feature>
<evidence type="ECO:0000250" key="1"/>
<evidence type="ECO:0000305" key="2"/>
<sequence length="137" mass="15508">MILEFKSEKKMINFSKSFFYPLPIGKIFVLSGDMGSGKTSFLKGLALNLGISYFTSPTYNIVNVYDFINFKFYHIDLYRVSSLEEFELVGGLEILMDLDSIIAIEWPQIALSIVPKDRLFSLTFKIVGSGRVVELNG</sequence>
<dbReference type="EMBL" id="AE000783">
    <property type="protein sequence ID" value="AAC66574.1"/>
    <property type="molecule type" value="Genomic_DNA"/>
</dbReference>
<dbReference type="PIR" id="B70123">
    <property type="entry name" value="B70123"/>
</dbReference>
<dbReference type="RefSeq" id="NP_212320.1">
    <property type="nucleotide sequence ID" value="NC_001318.1"/>
</dbReference>
<dbReference type="RefSeq" id="WP_002663946.1">
    <property type="nucleotide sequence ID" value="NC_001318.1"/>
</dbReference>
<dbReference type="SMR" id="O51204"/>
<dbReference type="STRING" id="224326.BB_0186"/>
<dbReference type="PaxDb" id="224326-BB_0186"/>
<dbReference type="EnsemblBacteria" id="AAC66574">
    <property type="protein sequence ID" value="AAC66574"/>
    <property type="gene ID" value="BB_0186"/>
</dbReference>
<dbReference type="KEGG" id="bbu:BB_0186"/>
<dbReference type="PATRIC" id="fig|224326.49.peg.583"/>
<dbReference type="HOGENOM" id="CLU_087829_3_0_12"/>
<dbReference type="OrthoDB" id="9815896at2"/>
<dbReference type="Proteomes" id="UP000001807">
    <property type="component" value="Chromosome"/>
</dbReference>
<dbReference type="GO" id="GO:0005737">
    <property type="term" value="C:cytoplasm"/>
    <property type="evidence" value="ECO:0007669"/>
    <property type="project" value="UniProtKB-SubCell"/>
</dbReference>
<dbReference type="GO" id="GO:0005524">
    <property type="term" value="F:ATP binding"/>
    <property type="evidence" value="ECO:0007669"/>
    <property type="project" value="UniProtKB-KW"/>
</dbReference>
<dbReference type="GO" id="GO:0046872">
    <property type="term" value="F:metal ion binding"/>
    <property type="evidence" value="ECO:0007669"/>
    <property type="project" value="UniProtKB-KW"/>
</dbReference>
<dbReference type="GO" id="GO:0002949">
    <property type="term" value="P:tRNA threonylcarbamoyladenosine modification"/>
    <property type="evidence" value="ECO:0007669"/>
    <property type="project" value="InterPro"/>
</dbReference>
<dbReference type="Gene3D" id="3.40.50.300">
    <property type="entry name" value="P-loop containing nucleotide triphosphate hydrolases"/>
    <property type="match status" value="1"/>
</dbReference>
<dbReference type="InterPro" id="IPR027417">
    <property type="entry name" value="P-loop_NTPase"/>
</dbReference>
<dbReference type="InterPro" id="IPR003442">
    <property type="entry name" value="T6A_TsaE"/>
</dbReference>
<dbReference type="NCBIfam" id="TIGR00150">
    <property type="entry name" value="T6A_YjeE"/>
    <property type="match status" value="1"/>
</dbReference>
<dbReference type="PANTHER" id="PTHR33540">
    <property type="entry name" value="TRNA THREONYLCARBAMOYLADENOSINE BIOSYNTHESIS PROTEIN TSAE"/>
    <property type="match status" value="1"/>
</dbReference>
<dbReference type="PANTHER" id="PTHR33540:SF2">
    <property type="entry name" value="TRNA THREONYLCARBAMOYLADENOSINE BIOSYNTHESIS PROTEIN TSAE"/>
    <property type="match status" value="1"/>
</dbReference>
<dbReference type="Pfam" id="PF02367">
    <property type="entry name" value="TsaE"/>
    <property type="match status" value="1"/>
</dbReference>
<dbReference type="SUPFAM" id="SSF52540">
    <property type="entry name" value="P-loop containing nucleoside triphosphate hydrolases"/>
    <property type="match status" value="1"/>
</dbReference>
<keyword id="KW-0067">ATP-binding</keyword>
<keyword id="KW-0963">Cytoplasm</keyword>
<keyword id="KW-0460">Magnesium</keyword>
<keyword id="KW-0479">Metal-binding</keyword>
<keyword id="KW-0547">Nucleotide-binding</keyword>
<keyword id="KW-1185">Reference proteome</keyword>
<keyword id="KW-0819">tRNA processing</keyword>
<comment type="function">
    <text evidence="1">Required for the formation of a threonylcarbamoyl group on adenosine at position 37 (t(6)A37) in tRNAs that read codons beginning with adenine. Is involved in the transfer of the threonylcarbamoyl moiety of threonylcarbamoyl-AMP (TC-AMP) to the N6 group of A37, together with TsaD and TsaB. TsaE seems to play an indirect role in the t(6)A biosynthesis pathway, possibly in regulating the core enzymatic function of TsaD (By similarity).</text>
</comment>
<comment type="subcellular location">
    <subcellularLocation>
        <location evidence="1">Cytoplasm</location>
    </subcellularLocation>
</comment>
<comment type="similarity">
    <text evidence="2">Belongs to the TsaE family.</text>
</comment>
<accession>O51204</accession>
<reference key="1">
    <citation type="journal article" date="1997" name="Nature">
        <title>Genomic sequence of a Lyme disease spirochaete, Borrelia burgdorferi.</title>
        <authorList>
            <person name="Fraser C.M."/>
            <person name="Casjens S."/>
            <person name="Huang W.M."/>
            <person name="Sutton G.G."/>
            <person name="Clayton R.A."/>
            <person name="Lathigra R."/>
            <person name="White O."/>
            <person name="Ketchum K.A."/>
            <person name="Dodson R.J."/>
            <person name="Hickey E.K."/>
            <person name="Gwinn M.L."/>
            <person name="Dougherty B.A."/>
            <person name="Tomb J.-F."/>
            <person name="Fleischmann R.D."/>
            <person name="Richardson D.L."/>
            <person name="Peterson J.D."/>
            <person name="Kerlavage A.R."/>
            <person name="Quackenbush J."/>
            <person name="Salzberg S.L."/>
            <person name="Hanson M."/>
            <person name="van Vugt R."/>
            <person name="Palmer N."/>
            <person name="Adams M.D."/>
            <person name="Gocayne J.D."/>
            <person name="Weidman J.F."/>
            <person name="Utterback T.R."/>
            <person name="Watthey L."/>
            <person name="McDonald L.A."/>
            <person name="Artiach P."/>
            <person name="Bowman C."/>
            <person name="Garland S.A."/>
            <person name="Fujii C."/>
            <person name="Cotton M.D."/>
            <person name="Horst K."/>
            <person name="Roberts K.M."/>
            <person name="Hatch B."/>
            <person name="Smith H.O."/>
            <person name="Venter J.C."/>
        </authorList>
    </citation>
    <scope>NUCLEOTIDE SEQUENCE [LARGE SCALE GENOMIC DNA]</scope>
    <source>
        <strain>ATCC 35210 / DSM 4680 / CIP 102532 / B31</strain>
    </source>
</reference>
<protein>
    <recommendedName>
        <fullName>tRNA threonylcarbamoyladenosine biosynthesis protein TsaE</fullName>
    </recommendedName>
    <alternativeName>
        <fullName>t(6)A37 threonylcarbamoyladenosine biosynthesis protein TsaE</fullName>
    </alternativeName>
</protein>
<gene>
    <name type="primary">tsaE</name>
    <name type="ordered locus">BB_0186</name>
</gene>